<sequence>MNLEELKKRQEKIRNFSIIAHIDHGKSTLADRILEKTETVSSREMQAQLLDSMDLERERGITIKLNAIELNYTAKDGETYIFHLIDTPGHVDFTYEVSRSLAACEGAILVVDAAQGIEAQTLANVYLALDNDLEIMPVINKIDLPAADPERVRTEIEDVIGLDASEAVLASAKAGIGIEEILEQIVEKVPAPTGDVTAPLKALIFDSVYDAYRGVILQVRVMDGVVKPGDKIQLMSNGKTFDVTEVGIFTPKAVGRDFLATGDVGYIAASIKTVQDTRVGDTVTLATNPAAEPLHGYKQMNPMVFAGLYPIESNKYNDLREALEKLQLNDASLQFEPETSQALGFGFRCGFLGLLHMDVIQERLEREFNIDLIMTAPSVIYKVNLTDGESMDVSNPSEFPDPTKIATIEEPYVKAQIMVPQEFVGAVMELAQRKRGDFVTMDYIDDNRVNVIYQIPLAEIVFDFFDKLKSSTRGYASFDYELSEYRPSKLVKMDILLNGDKVDALSFIVHKDFAYERGKLIVDKLKKIIPRQQFEVPIQAAIGHKIVARTDIKALRKNVLAKCYGGDVSRKRKLLEKQKAGKKRMKSIGSVEVPQEAFLSVLSMDEE</sequence>
<gene>
    <name evidence="1" type="primary">lepA</name>
    <name type="ordered locus">SPH_1318</name>
</gene>
<dbReference type="EC" id="3.6.5.n1" evidence="1"/>
<dbReference type="EMBL" id="CP000936">
    <property type="protein sequence ID" value="ACA37042.1"/>
    <property type="molecule type" value="Genomic_DNA"/>
</dbReference>
<dbReference type="RefSeq" id="WP_001047208.1">
    <property type="nucleotide sequence ID" value="NC_010380.1"/>
</dbReference>
<dbReference type="SMR" id="B1IC02"/>
<dbReference type="KEGG" id="spv:SPH_1318"/>
<dbReference type="HOGENOM" id="CLU_009995_3_3_9"/>
<dbReference type="Proteomes" id="UP000002163">
    <property type="component" value="Chromosome"/>
</dbReference>
<dbReference type="GO" id="GO:0005886">
    <property type="term" value="C:plasma membrane"/>
    <property type="evidence" value="ECO:0007669"/>
    <property type="project" value="UniProtKB-SubCell"/>
</dbReference>
<dbReference type="GO" id="GO:0005525">
    <property type="term" value="F:GTP binding"/>
    <property type="evidence" value="ECO:0007669"/>
    <property type="project" value="UniProtKB-UniRule"/>
</dbReference>
<dbReference type="GO" id="GO:0003924">
    <property type="term" value="F:GTPase activity"/>
    <property type="evidence" value="ECO:0007669"/>
    <property type="project" value="UniProtKB-UniRule"/>
</dbReference>
<dbReference type="GO" id="GO:0043022">
    <property type="term" value="F:ribosome binding"/>
    <property type="evidence" value="ECO:0007669"/>
    <property type="project" value="UniProtKB-UniRule"/>
</dbReference>
<dbReference type="GO" id="GO:0003746">
    <property type="term" value="F:translation elongation factor activity"/>
    <property type="evidence" value="ECO:0007669"/>
    <property type="project" value="UniProtKB-UniRule"/>
</dbReference>
<dbReference type="GO" id="GO:0045727">
    <property type="term" value="P:positive regulation of translation"/>
    <property type="evidence" value="ECO:0007669"/>
    <property type="project" value="UniProtKB-UniRule"/>
</dbReference>
<dbReference type="CDD" id="cd03699">
    <property type="entry name" value="EF4_II"/>
    <property type="match status" value="1"/>
</dbReference>
<dbReference type="CDD" id="cd16260">
    <property type="entry name" value="EF4_III"/>
    <property type="match status" value="1"/>
</dbReference>
<dbReference type="CDD" id="cd01890">
    <property type="entry name" value="LepA"/>
    <property type="match status" value="1"/>
</dbReference>
<dbReference type="CDD" id="cd03709">
    <property type="entry name" value="lepA_C"/>
    <property type="match status" value="1"/>
</dbReference>
<dbReference type="FunFam" id="3.40.50.300:FF:000078">
    <property type="entry name" value="Elongation factor 4"/>
    <property type="match status" value="1"/>
</dbReference>
<dbReference type="FunFam" id="2.40.30.10:FF:000015">
    <property type="entry name" value="Translation factor GUF1, mitochondrial"/>
    <property type="match status" value="1"/>
</dbReference>
<dbReference type="FunFam" id="3.30.70.240:FF:000007">
    <property type="entry name" value="Translation factor GUF1, mitochondrial"/>
    <property type="match status" value="1"/>
</dbReference>
<dbReference type="FunFam" id="3.30.70.2570:FF:000001">
    <property type="entry name" value="Translation factor GUF1, mitochondrial"/>
    <property type="match status" value="1"/>
</dbReference>
<dbReference type="FunFam" id="3.30.70.870:FF:000004">
    <property type="entry name" value="Translation factor GUF1, mitochondrial"/>
    <property type="match status" value="1"/>
</dbReference>
<dbReference type="Gene3D" id="3.30.70.240">
    <property type="match status" value="1"/>
</dbReference>
<dbReference type="Gene3D" id="3.30.70.2570">
    <property type="entry name" value="Elongation factor 4, C-terminal domain"/>
    <property type="match status" value="1"/>
</dbReference>
<dbReference type="Gene3D" id="3.30.70.870">
    <property type="entry name" value="Elongation Factor G (Translational Gtpase), domain 3"/>
    <property type="match status" value="1"/>
</dbReference>
<dbReference type="Gene3D" id="3.40.50.300">
    <property type="entry name" value="P-loop containing nucleotide triphosphate hydrolases"/>
    <property type="match status" value="1"/>
</dbReference>
<dbReference type="Gene3D" id="2.40.30.10">
    <property type="entry name" value="Translation factors"/>
    <property type="match status" value="1"/>
</dbReference>
<dbReference type="HAMAP" id="MF_00071">
    <property type="entry name" value="LepA"/>
    <property type="match status" value="1"/>
</dbReference>
<dbReference type="InterPro" id="IPR006297">
    <property type="entry name" value="EF-4"/>
</dbReference>
<dbReference type="InterPro" id="IPR035647">
    <property type="entry name" value="EFG_III/V"/>
</dbReference>
<dbReference type="InterPro" id="IPR000640">
    <property type="entry name" value="EFG_V-like"/>
</dbReference>
<dbReference type="InterPro" id="IPR004161">
    <property type="entry name" value="EFTu-like_2"/>
</dbReference>
<dbReference type="InterPro" id="IPR031157">
    <property type="entry name" value="G_TR_CS"/>
</dbReference>
<dbReference type="InterPro" id="IPR038363">
    <property type="entry name" value="LepA_C_sf"/>
</dbReference>
<dbReference type="InterPro" id="IPR013842">
    <property type="entry name" value="LepA_CTD"/>
</dbReference>
<dbReference type="InterPro" id="IPR035654">
    <property type="entry name" value="LepA_IV"/>
</dbReference>
<dbReference type="InterPro" id="IPR027417">
    <property type="entry name" value="P-loop_NTPase"/>
</dbReference>
<dbReference type="InterPro" id="IPR005225">
    <property type="entry name" value="Small_GTP-bd"/>
</dbReference>
<dbReference type="InterPro" id="IPR000795">
    <property type="entry name" value="T_Tr_GTP-bd_dom"/>
</dbReference>
<dbReference type="InterPro" id="IPR009000">
    <property type="entry name" value="Transl_B-barrel_sf"/>
</dbReference>
<dbReference type="NCBIfam" id="TIGR01393">
    <property type="entry name" value="lepA"/>
    <property type="match status" value="1"/>
</dbReference>
<dbReference type="NCBIfam" id="TIGR00231">
    <property type="entry name" value="small_GTP"/>
    <property type="match status" value="1"/>
</dbReference>
<dbReference type="PANTHER" id="PTHR43512:SF4">
    <property type="entry name" value="TRANSLATION FACTOR GUF1 HOMOLOG, CHLOROPLASTIC"/>
    <property type="match status" value="1"/>
</dbReference>
<dbReference type="PANTHER" id="PTHR43512">
    <property type="entry name" value="TRANSLATION FACTOR GUF1-RELATED"/>
    <property type="match status" value="1"/>
</dbReference>
<dbReference type="Pfam" id="PF00679">
    <property type="entry name" value="EFG_C"/>
    <property type="match status" value="1"/>
</dbReference>
<dbReference type="Pfam" id="PF00009">
    <property type="entry name" value="GTP_EFTU"/>
    <property type="match status" value="1"/>
</dbReference>
<dbReference type="Pfam" id="PF03144">
    <property type="entry name" value="GTP_EFTU_D2"/>
    <property type="match status" value="1"/>
</dbReference>
<dbReference type="Pfam" id="PF06421">
    <property type="entry name" value="LepA_C"/>
    <property type="match status" value="1"/>
</dbReference>
<dbReference type="PRINTS" id="PR00315">
    <property type="entry name" value="ELONGATNFCT"/>
</dbReference>
<dbReference type="SMART" id="SM00838">
    <property type="entry name" value="EFG_C"/>
    <property type="match status" value="1"/>
</dbReference>
<dbReference type="SUPFAM" id="SSF54980">
    <property type="entry name" value="EF-G C-terminal domain-like"/>
    <property type="match status" value="2"/>
</dbReference>
<dbReference type="SUPFAM" id="SSF52540">
    <property type="entry name" value="P-loop containing nucleoside triphosphate hydrolases"/>
    <property type="match status" value="1"/>
</dbReference>
<dbReference type="SUPFAM" id="SSF50447">
    <property type="entry name" value="Translation proteins"/>
    <property type="match status" value="1"/>
</dbReference>
<dbReference type="PROSITE" id="PS00301">
    <property type="entry name" value="G_TR_1"/>
    <property type="match status" value="1"/>
</dbReference>
<dbReference type="PROSITE" id="PS51722">
    <property type="entry name" value="G_TR_2"/>
    <property type="match status" value="1"/>
</dbReference>
<keyword id="KW-1003">Cell membrane</keyword>
<keyword id="KW-0342">GTP-binding</keyword>
<keyword id="KW-0378">Hydrolase</keyword>
<keyword id="KW-0472">Membrane</keyword>
<keyword id="KW-0547">Nucleotide-binding</keyword>
<keyword id="KW-0648">Protein biosynthesis</keyword>
<comment type="function">
    <text evidence="1">Required for accurate and efficient protein synthesis under certain stress conditions. May act as a fidelity factor of the translation reaction, by catalyzing a one-codon backward translocation of tRNAs on improperly translocated ribosomes. Back-translocation proceeds from a post-translocation (POST) complex to a pre-translocation (PRE) complex, thus giving elongation factor G a second chance to translocate the tRNAs correctly. Binds to ribosomes in a GTP-dependent manner.</text>
</comment>
<comment type="catalytic activity">
    <reaction evidence="1">
        <text>GTP + H2O = GDP + phosphate + H(+)</text>
        <dbReference type="Rhea" id="RHEA:19669"/>
        <dbReference type="ChEBI" id="CHEBI:15377"/>
        <dbReference type="ChEBI" id="CHEBI:15378"/>
        <dbReference type="ChEBI" id="CHEBI:37565"/>
        <dbReference type="ChEBI" id="CHEBI:43474"/>
        <dbReference type="ChEBI" id="CHEBI:58189"/>
        <dbReference type="EC" id="3.6.5.n1"/>
    </reaction>
</comment>
<comment type="subcellular location">
    <subcellularLocation>
        <location evidence="1">Cell membrane</location>
        <topology evidence="1">Peripheral membrane protein</topology>
        <orientation evidence="1">Cytoplasmic side</orientation>
    </subcellularLocation>
</comment>
<comment type="similarity">
    <text evidence="1">Belongs to the TRAFAC class translation factor GTPase superfamily. Classic translation factor GTPase family. LepA subfamily.</text>
</comment>
<protein>
    <recommendedName>
        <fullName evidence="1">Elongation factor 4</fullName>
        <shortName evidence="1">EF-4</shortName>
        <ecNumber evidence="1">3.6.5.n1</ecNumber>
    </recommendedName>
    <alternativeName>
        <fullName evidence="1">Ribosomal back-translocase LepA</fullName>
    </alternativeName>
</protein>
<reference key="1">
    <citation type="journal article" date="2010" name="Genome Biol.">
        <title>Structure and dynamics of the pan-genome of Streptococcus pneumoniae and closely related species.</title>
        <authorList>
            <person name="Donati C."/>
            <person name="Hiller N.L."/>
            <person name="Tettelin H."/>
            <person name="Muzzi A."/>
            <person name="Croucher N.J."/>
            <person name="Angiuoli S.V."/>
            <person name="Oggioni M."/>
            <person name="Dunning Hotopp J.C."/>
            <person name="Hu F.Z."/>
            <person name="Riley D.R."/>
            <person name="Covacci A."/>
            <person name="Mitchell T.J."/>
            <person name="Bentley S.D."/>
            <person name="Kilian M."/>
            <person name="Ehrlich G.D."/>
            <person name="Rappuoli R."/>
            <person name="Moxon E.R."/>
            <person name="Masignani V."/>
        </authorList>
    </citation>
    <scope>NUCLEOTIDE SEQUENCE [LARGE SCALE GENOMIC DNA]</scope>
    <source>
        <strain>Hungary19A-6</strain>
    </source>
</reference>
<organism>
    <name type="scientific">Streptococcus pneumoniae (strain Hungary19A-6)</name>
    <dbReference type="NCBI Taxonomy" id="487214"/>
    <lineage>
        <taxon>Bacteria</taxon>
        <taxon>Bacillati</taxon>
        <taxon>Bacillota</taxon>
        <taxon>Bacilli</taxon>
        <taxon>Lactobacillales</taxon>
        <taxon>Streptococcaceae</taxon>
        <taxon>Streptococcus</taxon>
    </lineage>
</organism>
<accession>B1IC02</accession>
<proteinExistence type="inferred from homology"/>
<name>LEPA_STRPI</name>
<feature type="chain" id="PRO_1000092453" description="Elongation factor 4">
    <location>
        <begin position="1"/>
        <end position="607"/>
    </location>
</feature>
<feature type="domain" description="tr-type G">
    <location>
        <begin position="11"/>
        <end position="193"/>
    </location>
</feature>
<feature type="binding site" evidence="1">
    <location>
        <begin position="23"/>
        <end position="28"/>
    </location>
    <ligand>
        <name>GTP</name>
        <dbReference type="ChEBI" id="CHEBI:37565"/>
    </ligand>
</feature>
<feature type="binding site" evidence="1">
    <location>
        <begin position="140"/>
        <end position="143"/>
    </location>
    <ligand>
        <name>GTP</name>
        <dbReference type="ChEBI" id="CHEBI:37565"/>
    </ligand>
</feature>
<evidence type="ECO:0000255" key="1">
    <source>
        <dbReference type="HAMAP-Rule" id="MF_00071"/>
    </source>
</evidence>